<comment type="subcellular location">
    <subcellularLocation>
        <location evidence="2">Membrane</location>
        <topology evidence="2">Single-pass membrane protein</topology>
    </subcellularLocation>
</comment>
<feature type="chain" id="PRO_0000202884" description="Uncharacterized protein YHL005C">
    <location>
        <begin position="1"/>
        <end position="130"/>
    </location>
</feature>
<feature type="transmembrane region" description="Helical" evidence="1">
    <location>
        <begin position="15"/>
        <end position="31"/>
    </location>
</feature>
<keyword id="KW-0472">Membrane</keyword>
<keyword id="KW-1185">Reference proteome</keyword>
<keyword id="KW-0812">Transmembrane</keyword>
<keyword id="KW-1133">Transmembrane helix</keyword>
<reference key="1">
    <citation type="journal article" date="1994" name="Science">
        <title>Complete nucleotide sequence of Saccharomyces cerevisiae chromosome VIII.</title>
        <authorList>
            <person name="Johnston M."/>
            <person name="Andrews S."/>
            <person name="Brinkman R."/>
            <person name="Cooper J."/>
            <person name="Ding H."/>
            <person name="Dover J."/>
            <person name="Du Z."/>
            <person name="Favello A."/>
            <person name="Fulton L."/>
            <person name="Gattung S."/>
            <person name="Geisel C."/>
            <person name="Kirsten J."/>
            <person name="Kucaba T."/>
            <person name="Hillier L.W."/>
            <person name="Jier M."/>
            <person name="Johnston L."/>
            <person name="Langston Y."/>
            <person name="Latreille P."/>
            <person name="Louis E.J."/>
            <person name="Macri C."/>
            <person name="Mardis E."/>
            <person name="Menezes S."/>
            <person name="Mouser L."/>
            <person name="Nhan M."/>
            <person name="Rifkin L."/>
            <person name="Riles L."/>
            <person name="St Peter H."/>
            <person name="Trevaskis E."/>
            <person name="Vaughan K."/>
            <person name="Vignati D."/>
            <person name="Wilcox L."/>
            <person name="Wohldman P."/>
            <person name="Waterston R."/>
            <person name="Wilson R."/>
            <person name="Vaudin M."/>
        </authorList>
    </citation>
    <scope>NUCLEOTIDE SEQUENCE [LARGE SCALE GENOMIC DNA]</scope>
    <source>
        <strain>ATCC 204508 / S288c</strain>
    </source>
</reference>
<reference key="2">
    <citation type="journal article" date="2014" name="G3 (Bethesda)">
        <title>The reference genome sequence of Saccharomyces cerevisiae: Then and now.</title>
        <authorList>
            <person name="Engel S.R."/>
            <person name="Dietrich F.S."/>
            <person name="Fisk D.G."/>
            <person name="Binkley G."/>
            <person name="Balakrishnan R."/>
            <person name="Costanzo M.C."/>
            <person name="Dwight S.S."/>
            <person name="Hitz B.C."/>
            <person name="Karra K."/>
            <person name="Nash R.S."/>
            <person name="Weng S."/>
            <person name="Wong E.D."/>
            <person name="Lloyd P."/>
            <person name="Skrzypek M.S."/>
            <person name="Miyasato S.R."/>
            <person name="Simison M."/>
            <person name="Cherry J.M."/>
        </authorList>
    </citation>
    <scope>GENOME REANNOTATION</scope>
    <source>
        <strain>ATCC 204508 / S288c</strain>
    </source>
</reference>
<proteinExistence type="predicted"/>
<name>YHA5_YEAST</name>
<protein>
    <recommendedName>
        <fullName>Uncharacterized protein YHL005C</fullName>
    </recommendedName>
</protein>
<accession>P38752</accession>
<accession>A0A1S0SZN9</accession>
<gene>
    <name type="ordered locus">YHL005C</name>
</gene>
<organism>
    <name type="scientific">Saccharomyces cerevisiae (strain ATCC 204508 / S288c)</name>
    <name type="common">Baker's yeast</name>
    <dbReference type="NCBI Taxonomy" id="559292"/>
    <lineage>
        <taxon>Eukaryota</taxon>
        <taxon>Fungi</taxon>
        <taxon>Dikarya</taxon>
        <taxon>Ascomycota</taxon>
        <taxon>Saccharomycotina</taxon>
        <taxon>Saccharomycetes</taxon>
        <taxon>Saccharomycetales</taxon>
        <taxon>Saccharomycetaceae</taxon>
        <taxon>Saccharomyces</taxon>
    </lineage>
</organism>
<dbReference type="EMBL" id="U11581">
    <property type="protein sequence ID" value="AAB69749.1"/>
    <property type="molecule type" value="Genomic_DNA"/>
</dbReference>
<dbReference type="EMBL" id="BK006934">
    <property type="protein sequence ID" value="DAA80258.1"/>
    <property type="molecule type" value="Genomic_DNA"/>
</dbReference>
<dbReference type="PIR" id="S46823">
    <property type="entry name" value="S46823"/>
</dbReference>
<dbReference type="RefSeq" id="NP_001335738.1">
    <property type="nucleotide sequence ID" value="NM_001348872.1"/>
</dbReference>
<dbReference type="DIP" id="DIP-5305N"/>
<dbReference type="FunCoup" id="P38752">
    <property type="interactions" value="23"/>
</dbReference>
<dbReference type="STRING" id="4932.YHL005C"/>
<dbReference type="PaxDb" id="4932-YHL005C"/>
<dbReference type="EnsemblFungi" id="YHL005C_mRNA">
    <property type="protein sequence ID" value="YHL005C"/>
    <property type="gene ID" value="YHL005C"/>
</dbReference>
<dbReference type="GeneID" id="856385"/>
<dbReference type="AGR" id="SGD:S000000997"/>
<dbReference type="SGD" id="S000000997">
    <property type="gene designation" value="YHL005C"/>
</dbReference>
<dbReference type="HOGENOM" id="CLU_1939737_0_0_1"/>
<dbReference type="InParanoid" id="P38752"/>
<dbReference type="PRO" id="PR:P38752"/>
<dbReference type="Proteomes" id="UP000002311">
    <property type="component" value="Chromosome VIII"/>
</dbReference>
<dbReference type="RNAct" id="P38752">
    <property type="molecule type" value="protein"/>
</dbReference>
<dbReference type="GO" id="GO:0016020">
    <property type="term" value="C:membrane"/>
    <property type="evidence" value="ECO:0007669"/>
    <property type="project" value="UniProtKB-SubCell"/>
</dbReference>
<sequence length="130" mass="15382">MRKESFLTFYFSNHLYLCPAIIRLSSVCTLARTDYYLPSNIAVTYDIQISSLGFTYRIDFFLALFSDPARPFLTEINRKIGQYACVIREREQAGEYSFHYSLCININVYILHIHIYIDRYIYAYINAQVQ</sequence>
<evidence type="ECO:0000255" key="1"/>
<evidence type="ECO:0000305" key="2"/>